<gene>
    <name evidence="1" type="primary">MT-ND2</name>
    <name type="synonym">MTND2</name>
    <name type="synonym">NADH2</name>
    <name type="synonym">ND2</name>
</gene>
<protein>
    <recommendedName>
        <fullName evidence="1">NADH-ubiquinone oxidoreductase chain 2</fullName>
        <ecNumber evidence="1">7.1.1.2</ecNumber>
    </recommendedName>
    <alternativeName>
        <fullName>NADH dehydrogenase subunit 2</fullName>
    </alternativeName>
</protein>
<reference key="1">
    <citation type="journal article" date="2002" name="Proc. Natl. Acad. Sci. U.S.A.">
        <title>Mammalian mitogenomic relationships and the root of the eutherian tree.</title>
        <authorList>
            <person name="Arnason U."/>
            <person name="Adegoke J.A."/>
            <person name="Bodin K."/>
            <person name="Born E.W."/>
            <person name="Esa Y.B."/>
            <person name="Gullberg A."/>
            <person name="Nilsson M."/>
            <person name="Short R.V."/>
            <person name="Xu X."/>
            <person name="Janke A."/>
        </authorList>
    </citation>
    <scope>NUCLEOTIDE SEQUENCE [GENOMIC DNA]</scope>
</reference>
<geneLocation type="mitochondrion"/>
<dbReference type="EC" id="7.1.1.2" evidence="1"/>
<dbReference type="EMBL" id="AJ421451">
    <property type="protein sequence ID" value="CAD13422.1"/>
    <property type="molecule type" value="Genomic_DNA"/>
</dbReference>
<dbReference type="RefSeq" id="NP_659289.1">
    <property type="nucleotide sequence ID" value="NC_004025.1"/>
</dbReference>
<dbReference type="SMR" id="Q8LX31"/>
<dbReference type="GO" id="GO:0005743">
    <property type="term" value="C:mitochondrial inner membrane"/>
    <property type="evidence" value="ECO:0000250"/>
    <property type="project" value="UniProtKB"/>
</dbReference>
<dbReference type="GO" id="GO:0008137">
    <property type="term" value="F:NADH dehydrogenase (ubiquinone) activity"/>
    <property type="evidence" value="ECO:0000250"/>
    <property type="project" value="UniProtKB"/>
</dbReference>
<dbReference type="GO" id="GO:0006120">
    <property type="term" value="P:mitochondrial electron transport, NADH to ubiquinone"/>
    <property type="evidence" value="ECO:0000250"/>
    <property type="project" value="UniProtKB"/>
</dbReference>
<dbReference type="GO" id="GO:0032981">
    <property type="term" value="P:mitochondrial respiratory chain complex I assembly"/>
    <property type="evidence" value="ECO:0000250"/>
    <property type="project" value="UniProtKB"/>
</dbReference>
<dbReference type="InterPro" id="IPR050175">
    <property type="entry name" value="Complex_I_Subunit_2"/>
</dbReference>
<dbReference type="InterPro" id="IPR010933">
    <property type="entry name" value="NADH_DH_su2_C"/>
</dbReference>
<dbReference type="InterPro" id="IPR003917">
    <property type="entry name" value="NADH_UbQ_OxRdtase_chain2"/>
</dbReference>
<dbReference type="InterPro" id="IPR001750">
    <property type="entry name" value="ND/Mrp_TM"/>
</dbReference>
<dbReference type="PANTHER" id="PTHR46552">
    <property type="entry name" value="NADH-UBIQUINONE OXIDOREDUCTASE CHAIN 2"/>
    <property type="match status" value="1"/>
</dbReference>
<dbReference type="PANTHER" id="PTHR46552:SF1">
    <property type="entry name" value="NADH-UBIQUINONE OXIDOREDUCTASE CHAIN 2"/>
    <property type="match status" value="1"/>
</dbReference>
<dbReference type="Pfam" id="PF06444">
    <property type="entry name" value="NADH_dehy_S2_C"/>
    <property type="match status" value="1"/>
</dbReference>
<dbReference type="Pfam" id="PF00361">
    <property type="entry name" value="Proton_antipo_M"/>
    <property type="match status" value="1"/>
</dbReference>
<dbReference type="PRINTS" id="PR01436">
    <property type="entry name" value="NADHDHGNASE2"/>
</dbReference>
<organism>
    <name type="scientific">Lemur catta</name>
    <name type="common">Ring-tailed lemur</name>
    <dbReference type="NCBI Taxonomy" id="9447"/>
    <lineage>
        <taxon>Eukaryota</taxon>
        <taxon>Metazoa</taxon>
        <taxon>Chordata</taxon>
        <taxon>Craniata</taxon>
        <taxon>Vertebrata</taxon>
        <taxon>Euteleostomi</taxon>
        <taxon>Mammalia</taxon>
        <taxon>Eutheria</taxon>
        <taxon>Euarchontoglires</taxon>
        <taxon>Primates</taxon>
        <taxon>Strepsirrhini</taxon>
        <taxon>Lemuriformes</taxon>
        <taxon>Lemuridae</taxon>
        <taxon>Lemur</taxon>
    </lineage>
</organism>
<name>NU2M_LEMCA</name>
<accession>Q8LX31</accession>
<feature type="chain" id="PRO_0000117600" description="NADH-ubiquinone oxidoreductase chain 2">
    <location>
        <begin position="1"/>
        <end position="347"/>
    </location>
</feature>
<feature type="transmembrane region" description="Helical" evidence="3">
    <location>
        <begin position="3"/>
        <end position="23"/>
    </location>
</feature>
<feature type="transmembrane region" description="Helical" evidence="3">
    <location>
        <begin position="25"/>
        <end position="45"/>
    </location>
</feature>
<feature type="transmembrane region" description="Helical" evidence="3">
    <location>
        <begin position="59"/>
        <end position="79"/>
    </location>
</feature>
<feature type="transmembrane region" description="Helical" evidence="3">
    <location>
        <begin position="96"/>
        <end position="116"/>
    </location>
</feature>
<feature type="transmembrane region" description="Helical" evidence="3">
    <location>
        <begin position="127"/>
        <end position="147"/>
    </location>
</feature>
<feature type="transmembrane region" description="Helical" evidence="3">
    <location>
        <begin position="150"/>
        <end position="170"/>
    </location>
</feature>
<feature type="transmembrane region" description="Helical" evidence="3">
    <location>
        <begin position="193"/>
        <end position="213"/>
    </location>
</feature>
<feature type="transmembrane region" description="Helical" evidence="3">
    <location>
        <begin position="240"/>
        <end position="260"/>
    </location>
</feature>
<feature type="transmembrane region" description="Helical" evidence="3">
    <location>
        <begin position="274"/>
        <end position="294"/>
    </location>
</feature>
<feature type="transmembrane region" description="Helical" evidence="3">
    <location>
        <begin position="323"/>
        <end position="343"/>
    </location>
</feature>
<evidence type="ECO:0000250" key="1">
    <source>
        <dbReference type="UniProtKB" id="P03891"/>
    </source>
</evidence>
<evidence type="ECO:0000250" key="2">
    <source>
        <dbReference type="UniProtKB" id="P03892"/>
    </source>
</evidence>
<evidence type="ECO:0000255" key="3"/>
<evidence type="ECO:0000305" key="4"/>
<comment type="function">
    <text evidence="1">Core subunit of the mitochondrial membrane respiratory chain NADH dehydrogenase (Complex I) which catalyzes electron transfer from NADH through the respiratory chain, using ubiquinone as an electron acceptor. Essential for the catalytic activity and assembly of complex I.</text>
</comment>
<comment type="catalytic activity">
    <reaction evidence="1">
        <text>a ubiquinone + NADH + 5 H(+)(in) = a ubiquinol + NAD(+) + 4 H(+)(out)</text>
        <dbReference type="Rhea" id="RHEA:29091"/>
        <dbReference type="Rhea" id="RHEA-COMP:9565"/>
        <dbReference type="Rhea" id="RHEA-COMP:9566"/>
        <dbReference type="ChEBI" id="CHEBI:15378"/>
        <dbReference type="ChEBI" id="CHEBI:16389"/>
        <dbReference type="ChEBI" id="CHEBI:17976"/>
        <dbReference type="ChEBI" id="CHEBI:57540"/>
        <dbReference type="ChEBI" id="CHEBI:57945"/>
        <dbReference type="EC" id="7.1.1.2"/>
    </reaction>
</comment>
<comment type="subunit">
    <text evidence="1 2">Core subunit of respiratory chain NADH dehydrogenase (Complex I) which is composed of 45 different subunits. Interacts with TMEM242 (By similarity).</text>
</comment>
<comment type="subcellular location">
    <subcellularLocation>
        <location evidence="2">Mitochondrion inner membrane</location>
        <topology evidence="3">Multi-pass membrane protein</topology>
    </subcellularLocation>
</comment>
<comment type="similarity">
    <text evidence="4">Belongs to the complex I subunit 2 family.</text>
</comment>
<keyword id="KW-0249">Electron transport</keyword>
<keyword id="KW-0472">Membrane</keyword>
<keyword id="KW-0496">Mitochondrion</keyword>
<keyword id="KW-0999">Mitochondrion inner membrane</keyword>
<keyword id="KW-0520">NAD</keyword>
<keyword id="KW-0679">Respiratory chain</keyword>
<keyword id="KW-1278">Translocase</keyword>
<keyword id="KW-0812">Transmembrane</keyword>
<keyword id="KW-1133">Transmembrane helix</keyword>
<keyword id="KW-0813">Transport</keyword>
<keyword id="KW-0830">Ubiquinone</keyword>
<proteinExistence type="inferred from homology"/>
<sequence>MKPIILMFIMLTIFMGTMLTMISSHWLLMWVGLEINMLAIIPILMKKISPRSTEAATKYFLTQATASMLLMFSIVINTANSGQWGITNMHNQLTSLVTMAALMMKLGMTPFHFWVPEVTQGISLMSGMLLLTWQKLAPISILLQIFPSMNPNIILLIAILSILVGGWGGLNQTQLRKILAYSSIAHMGWMMAILMYWPSLTMLNLLIYLMLTITLFSVLNINTNTTTLTLSNTWNKTPMITLTILISLLSLGGLPPLTGFLPKWTIIQELTKNSNIMLATIMAIMALLNLYFYMRLIYSTSLTMFPTLNNMKMKWQFQQTKQIFLLSPLVILATLTLPLSPALLTLN</sequence>